<sequence>MGKLTLLLLALLVWLQYSLWFGKNGIHDYSRVNDDVVAQQATNAKLKARNDQLFAEIDDLNGGQEAIEERARNELSMTKPGETFYRLVPDASKRAATAGQTHR</sequence>
<proteinExistence type="inferred from homology"/>
<gene>
    <name evidence="1" type="primary">ftsB</name>
    <name type="ordered locus">STM2931</name>
</gene>
<evidence type="ECO:0000255" key="1">
    <source>
        <dbReference type="HAMAP-Rule" id="MF_00599"/>
    </source>
</evidence>
<protein>
    <recommendedName>
        <fullName evidence="1">Cell division protein FtsB</fullName>
    </recommendedName>
</protein>
<organism>
    <name type="scientific">Salmonella typhimurium (strain LT2 / SGSC1412 / ATCC 700720)</name>
    <dbReference type="NCBI Taxonomy" id="99287"/>
    <lineage>
        <taxon>Bacteria</taxon>
        <taxon>Pseudomonadati</taxon>
        <taxon>Pseudomonadota</taxon>
        <taxon>Gammaproteobacteria</taxon>
        <taxon>Enterobacterales</taxon>
        <taxon>Enterobacteriaceae</taxon>
        <taxon>Salmonella</taxon>
    </lineage>
</organism>
<feature type="chain" id="PRO_0000214454" description="Cell division protein FtsB">
    <location>
        <begin position="1"/>
        <end position="103"/>
    </location>
</feature>
<feature type="topological domain" description="Cytoplasmic" evidence="1">
    <location>
        <begin position="1"/>
        <end position="3"/>
    </location>
</feature>
<feature type="transmembrane region" description="Helical" evidence="1">
    <location>
        <begin position="4"/>
        <end position="21"/>
    </location>
</feature>
<feature type="topological domain" description="Periplasmic" evidence="1">
    <location>
        <begin position="22"/>
        <end position="103"/>
    </location>
</feature>
<feature type="coiled-coil region" evidence="1">
    <location>
        <begin position="33"/>
        <end position="62"/>
    </location>
</feature>
<keyword id="KW-0131">Cell cycle</keyword>
<keyword id="KW-0132">Cell division</keyword>
<keyword id="KW-0997">Cell inner membrane</keyword>
<keyword id="KW-1003">Cell membrane</keyword>
<keyword id="KW-0175">Coiled coil</keyword>
<keyword id="KW-0472">Membrane</keyword>
<keyword id="KW-1185">Reference proteome</keyword>
<keyword id="KW-0812">Transmembrane</keyword>
<keyword id="KW-1133">Transmembrane helix</keyword>
<name>FTSB_SALTY</name>
<comment type="function">
    <text evidence="1">Essential cell division protein. May link together the upstream cell division proteins, which are predominantly cytoplasmic, with the downstream cell division proteins, which are predominantly periplasmic.</text>
</comment>
<comment type="subunit">
    <text evidence="1">Part of a complex composed of FtsB, FtsL and FtsQ.</text>
</comment>
<comment type="subcellular location">
    <subcellularLocation>
        <location evidence="1">Cell inner membrane</location>
        <topology evidence="1">Single-pass type II membrane protein</topology>
    </subcellularLocation>
    <text evidence="1">Localizes to the division septum.</text>
</comment>
<comment type="similarity">
    <text evidence="1">Belongs to the FtsB family.</text>
</comment>
<reference key="1">
    <citation type="journal article" date="2001" name="Nature">
        <title>Complete genome sequence of Salmonella enterica serovar Typhimurium LT2.</title>
        <authorList>
            <person name="McClelland M."/>
            <person name="Sanderson K.E."/>
            <person name="Spieth J."/>
            <person name="Clifton S.W."/>
            <person name="Latreille P."/>
            <person name="Courtney L."/>
            <person name="Porwollik S."/>
            <person name="Ali J."/>
            <person name="Dante M."/>
            <person name="Du F."/>
            <person name="Hou S."/>
            <person name="Layman D."/>
            <person name="Leonard S."/>
            <person name="Nguyen C."/>
            <person name="Scott K."/>
            <person name="Holmes A."/>
            <person name="Grewal N."/>
            <person name="Mulvaney E."/>
            <person name="Ryan E."/>
            <person name="Sun H."/>
            <person name="Florea L."/>
            <person name="Miller W."/>
            <person name="Stoneking T."/>
            <person name="Nhan M."/>
            <person name="Waterston R."/>
            <person name="Wilson R.K."/>
        </authorList>
    </citation>
    <scope>NUCLEOTIDE SEQUENCE [LARGE SCALE GENOMIC DNA]</scope>
    <source>
        <strain>LT2 / SGSC1412 / ATCC 700720</strain>
    </source>
</reference>
<accession>P64162</accession>
<accession>Q8XEP2</accession>
<dbReference type="EMBL" id="AE006468">
    <property type="protein sequence ID" value="AAL21811.1"/>
    <property type="molecule type" value="Genomic_DNA"/>
</dbReference>
<dbReference type="RefSeq" id="WP_000517480.1">
    <property type="nucleotide sequence ID" value="NC_003197.2"/>
</dbReference>
<dbReference type="SMR" id="P64162"/>
<dbReference type="STRING" id="99287.STM2931"/>
<dbReference type="PaxDb" id="99287-STM2931"/>
<dbReference type="KEGG" id="stm:STM2931"/>
<dbReference type="PATRIC" id="fig|99287.12.peg.3085"/>
<dbReference type="HOGENOM" id="CLU_134863_5_2_6"/>
<dbReference type="OMA" id="YELGMVK"/>
<dbReference type="PhylomeDB" id="P64162"/>
<dbReference type="BioCyc" id="SENT99287:STM2931-MONOMER"/>
<dbReference type="Proteomes" id="UP000001014">
    <property type="component" value="Chromosome"/>
</dbReference>
<dbReference type="GO" id="GO:0032153">
    <property type="term" value="C:cell division site"/>
    <property type="evidence" value="ECO:0007669"/>
    <property type="project" value="UniProtKB-UniRule"/>
</dbReference>
<dbReference type="GO" id="GO:0030428">
    <property type="term" value="C:cell septum"/>
    <property type="evidence" value="ECO:0000318"/>
    <property type="project" value="GO_Central"/>
</dbReference>
<dbReference type="GO" id="GO:0005886">
    <property type="term" value="C:plasma membrane"/>
    <property type="evidence" value="ECO:0007669"/>
    <property type="project" value="UniProtKB-SubCell"/>
</dbReference>
<dbReference type="GO" id="GO:0043093">
    <property type="term" value="P:FtsZ-dependent cytokinesis"/>
    <property type="evidence" value="ECO:0000318"/>
    <property type="project" value="GO_Central"/>
</dbReference>
<dbReference type="FunFam" id="1.20.5.400:FF:000001">
    <property type="entry name" value="Cell division protein FtsB"/>
    <property type="match status" value="1"/>
</dbReference>
<dbReference type="Gene3D" id="1.20.5.400">
    <property type="match status" value="1"/>
</dbReference>
<dbReference type="HAMAP" id="MF_00599">
    <property type="entry name" value="FtsB"/>
    <property type="match status" value="1"/>
</dbReference>
<dbReference type="InterPro" id="IPR023081">
    <property type="entry name" value="Cell_div_FtsB"/>
</dbReference>
<dbReference type="InterPro" id="IPR007060">
    <property type="entry name" value="FtsL/DivIC"/>
</dbReference>
<dbReference type="NCBIfam" id="NF002058">
    <property type="entry name" value="PRK00888.1"/>
    <property type="match status" value="1"/>
</dbReference>
<dbReference type="PANTHER" id="PTHR37485">
    <property type="entry name" value="CELL DIVISION PROTEIN FTSB"/>
    <property type="match status" value="1"/>
</dbReference>
<dbReference type="PANTHER" id="PTHR37485:SF1">
    <property type="entry name" value="CELL DIVISION PROTEIN FTSB"/>
    <property type="match status" value="1"/>
</dbReference>
<dbReference type="Pfam" id="PF04977">
    <property type="entry name" value="DivIC"/>
    <property type="match status" value="1"/>
</dbReference>